<name>CF263_TETTS</name>
<protein>
    <recommendedName>
        <fullName>Cilia- and flagella-associated protein 263</fullName>
    </recommendedName>
</protein>
<accession>Q22KK0</accession>
<evidence type="ECO:0000269" key="1">
    <source>
    </source>
</evidence>
<evidence type="ECO:0000303" key="2">
    <source>
    </source>
</evidence>
<evidence type="ECO:0000305" key="3"/>
<evidence type="ECO:0000312" key="4">
    <source>
        <dbReference type="EMBL" id="EAR85799.1"/>
    </source>
</evidence>
<evidence type="ECO:0000312" key="5">
    <source>
        <dbReference type="Proteomes" id="UP000009168"/>
    </source>
</evidence>
<organism evidence="4 5">
    <name type="scientific">Tetrahymena thermophila (strain SB210)</name>
    <dbReference type="NCBI Taxonomy" id="312017"/>
    <lineage>
        <taxon>Eukaryota</taxon>
        <taxon>Sar</taxon>
        <taxon>Alveolata</taxon>
        <taxon>Ciliophora</taxon>
        <taxon>Intramacronucleata</taxon>
        <taxon>Oligohymenophorea</taxon>
        <taxon>Hymenostomatida</taxon>
        <taxon>Tetrahymenina</taxon>
        <taxon>Tetrahymenidae</taxon>
        <taxon>Tetrahymena</taxon>
    </lineage>
</organism>
<feature type="chain" id="PRO_0000460049" description="Cilia- and flagella-associated protein 263">
    <location>
        <begin position="1"/>
        <end position="361"/>
    </location>
</feature>
<gene>
    <name type="primary">CFAP263</name>
    <name evidence="2" type="synonym">CCDC113</name>
    <name evidence="4" type="ORF">TTHERM_00312810</name>
</gene>
<proteinExistence type="evidence at protein level"/>
<reference evidence="5" key="1">
    <citation type="journal article" date="2006" name="PLoS Biol.">
        <title>Macronuclear genome sequence of the ciliate Tetrahymena thermophila, a model eukaryote.</title>
        <authorList>
            <person name="Eisen J.A."/>
            <person name="Coyne R.S."/>
            <person name="Wu M."/>
            <person name="Wu D."/>
            <person name="Thiagarajan M."/>
            <person name="Wortman J.R."/>
            <person name="Badger J.H."/>
            <person name="Ren Q."/>
            <person name="Amedeo P."/>
            <person name="Jones K.M."/>
            <person name="Tallon L.J."/>
            <person name="Delcher A.L."/>
            <person name="Salzberg S.L."/>
            <person name="Silva J.C."/>
            <person name="Haas B.J."/>
            <person name="Majoros W.H."/>
            <person name="Farzad M."/>
            <person name="Carlton J.M."/>
            <person name="Smith R.K. Jr."/>
            <person name="Garg J."/>
            <person name="Pearlman R.E."/>
            <person name="Karrer K.M."/>
            <person name="Sun L."/>
            <person name="Manning G."/>
            <person name="Elde N.C."/>
            <person name="Turkewitz A.P."/>
            <person name="Asai D.J."/>
            <person name="Wilkes D.E."/>
            <person name="Wang Y."/>
            <person name="Cai H."/>
            <person name="Collins K."/>
            <person name="Stewart B.A."/>
            <person name="Lee S.R."/>
            <person name="Wilamowska K."/>
            <person name="Weinberg Z."/>
            <person name="Ruzzo W.L."/>
            <person name="Wloga D."/>
            <person name="Gaertig J."/>
            <person name="Frankel J."/>
            <person name="Tsao C.-C."/>
            <person name="Gorovsky M.A."/>
            <person name="Keeling P.J."/>
            <person name="Waller R.F."/>
            <person name="Patron N.J."/>
            <person name="Cherry J.M."/>
            <person name="Stover N.A."/>
            <person name="Krieger C.J."/>
            <person name="del Toro C."/>
            <person name="Ryder H.F."/>
            <person name="Williamson S.C."/>
            <person name="Barbeau R.A."/>
            <person name="Hamilton E.P."/>
            <person name="Orias E."/>
        </authorList>
    </citation>
    <scope>NUCLEOTIDE SEQUENCE [LARGE SCALE GENOMIC DNA]</scope>
    <source>
        <strain evidence="5">SB210</strain>
    </source>
</reference>
<reference key="2">
    <citation type="journal article" date="2021" name="PLoS Genet.">
        <title>Ccdc113/Ccdc96 complex, a novel regulator of ciliary beating that connects radial spoke 3 to dynein g and the nexin link.</title>
        <authorList>
            <person name="Bazan R."/>
            <person name="Schroefel A."/>
            <person name="Joachimiak E."/>
            <person name="Poprzeczko M."/>
            <person name="Pigino G."/>
            <person name="Wloga D."/>
        </authorList>
    </citation>
    <scope>FUNCTION</scope>
    <scope>INTERACTION WITH CFAP184</scope>
    <scope>SUBCELLULAR LOCATION</scope>
    <scope>DISRUPTION PHENOTYPE</scope>
</reference>
<keyword id="KW-0002">3D-structure</keyword>
<keyword id="KW-0966">Cell projection</keyword>
<keyword id="KW-0970">Cilium biogenesis/degradation</keyword>
<keyword id="KW-0175">Coiled coil</keyword>
<keyword id="KW-1185">Reference proteome</keyword>
<comment type="function">
    <text evidence="1">In complex with CFAP263, acts as a regulator of ciliary beating that connects radial spoke 3 (RS3) to the inner dynein arm (IDA) and the nexin-dynein regulatory complex (N-DRC). The complex is positioned parallel to N-DRC and forms a connection between the arch at the base of RS3, the IDA tail and N-DRC.</text>
</comment>
<comment type="subunit">
    <text evidence="1">Forms a complex with CFAP184; the interaction is required for functional activity in cilia.</text>
</comment>
<comment type="subcellular location">
    <subcellularLocation>
        <location evidence="1">Cell projection</location>
        <location evidence="1">Cilium</location>
    </subcellularLocation>
    <text evidence="1">Localizes at cilium but not at the ciliary tips.</text>
</comment>
<comment type="disruption phenotype">
    <text evidence="1">Mutants swimming speed is reduced compared to wild-type with trajectories wavy and kinky. Cilia length is not affected.</text>
</comment>
<comment type="similarity">
    <text evidence="3">Belongs to the CFAP263 family.</text>
</comment>
<dbReference type="EMBL" id="GG662498">
    <property type="protein sequence ID" value="EAR85799.1"/>
    <property type="molecule type" value="Genomic_DNA"/>
</dbReference>
<dbReference type="RefSeq" id="XP_001033462.1">
    <property type="nucleotide sequence ID" value="XM_001033462.3"/>
</dbReference>
<dbReference type="PDB" id="8TEK">
    <property type="method" value="EM"/>
    <property type="resolution" value="3.60 A"/>
    <property type="chains" value="T=1-361"/>
</dbReference>
<dbReference type="PDB" id="8TID">
    <property type="method" value="EM"/>
    <property type="resolution" value="3.60 A"/>
    <property type="chains" value="T=1-361"/>
</dbReference>
<dbReference type="PDBsum" id="8TEK"/>
<dbReference type="PDBsum" id="8TID"/>
<dbReference type="EMDB" id="EMD-41189"/>
<dbReference type="EMDB" id="EMD-41284"/>
<dbReference type="SMR" id="Q22KK0"/>
<dbReference type="STRING" id="312017.Q22KK0"/>
<dbReference type="EnsemblProtists" id="EAR85799">
    <property type="protein sequence ID" value="EAR85799"/>
    <property type="gene ID" value="TTHERM_00312810"/>
</dbReference>
<dbReference type="GeneID" id="7843018"/>
<dbReference type="KEGG" id="tet:TTHERM_00312810"/>
<dbReference type="eggNOG" id="ENOG502QU7J">
    <property type="taxonomic scope" value="Eukaryota"/>
</dbReference>
<dbReference type="HOGENOM" id="CLU_046867_0_0_1"/>
<dbReference type="InParanoid" id="Q22KK0"/>
<dbReference type="OMA" id="TCQQHRA"/>
<dbReference type="OrthoDB" id="10259713at2759"/>
<dbReference type="Proteomes" id="UP000009168">
    <property type="component" value="Unassembled WGS sequence"/>
</dbReference>
<dbReference type="GO" id="GO:0005930">
    <property type="term" value="C:axoneme"/>
    <property type="evidence" value="ECO:0007669"/>
    <property type="project" value="TreeGrafter"/>
</dbReference>
<dbReference type="GO" id="GO:0036064">
    <property type="term" value="C:ciliary basal body"/>
    <property type="evidence" value="ECO:0007669"/>
    <property type="project" value="TreeGrafter"/>
</dbReference>
<dbReference type="GO" id="GO:0060271">
    <property type="term" value="P:cilium assembly"/>
    <property type="evidence" value="ECO:0007669"/>
    <property type="project" value="TreeGrafter"/>
</dbReference>
<dbReference type="InterPro" id="IPR051885">
    <property type="entry name" value="CC_domain-Cilium_Assoc"/>
</dbReference>
<dbReference type="InterPro" id="IPR025254">
    <property type="entry name" value="CCDC113/CCDC96_CC"/>
</dbReference>
<dbReference type="PANTHER" id="PTHR15654:SF2">
    <property type="entry name" value="COILED-COIL DOMAIN-CONTAINING PROTEIN 113"/>
    <property type="match status" value="1"/>
</dbReference>
<dbReference type="PANTHER" id="PTHR15654">
    <property type="entry name" value="COILED-COIL DOMAIN-CONTAINING PROTEIN 113-RELATED"/>
    <property type="match status" value="1"/>
</dbReference>
<dbReference type="Pfam" id="PF13870">
    <property type="entry name" value="CCDC113_CCDC96_CC"/>
    <property type="match status" value="1"/>
</dbReference>
<sequence length="361" mass="42852">MNQDKHPEITDEEQELITVEELSQKLELLYKDMEQIRRENLLFEAYLARNRKEIAKEDEVSEDKKGKGKKKDKNVDKKSLLLTNEEKFEIAQQEQDALKKQIDDGRIKSDQILETLRAILEETDMAITEIRKDAFDFQREILVGGENSRTGKIEAEKIIKFFEEKERQKDALIAKYSSKRTNLERQILKTNNQIQKKEEMGDDLKFIDFYQLQIENKKYVKEIDDKNKKLLALKISTNRISQTLKDEKQNLKQELDKGKEYASQMSERKKKISKIDAQIKSVKKVTSKLEKDRKIYDKQKEIFVQDNQDDVPQIMKYVQYKSKEQQLLYAIQNLERKIEIAELAYKKANRILQSSQQFQQK</sequence>